<accession>Q6DCW7</accession>
<dbReference type="EMBL" id="BC077871">
    <property type="protein sequence ID" value="AAH77871.1"/>
    <property type="molecule type" value="mRNA"/>
</dbReference>
<dbReference type="RefSeq" id="NP_001086993.2">
    <property type="nucleotide sequence ID" value="NM_001093524.1"/>
</dbReference>
<dbReference type="GlyCosmos" id="Q6DCW7">
    <property type="glycosylation" value="2 sites, No reported glycans"/>
</dbReference>
<dbReference type="DNASU" id="446828"/>
<dbReference type="GeneID" id="446828"/>
<dbReference type="KEGG" id="xla:446828"/>
<dbReference type="AGR" id="Xenbase:XB-GENE-987554"/>
<dbReference type="CTD" id="446828"/>
<dbReference type="Xenbase" id="XB-GENE-987554">
    <property type="gene designation" value="gpr137b.L"/>
</dbReference>
<dbReference type="OrthoDB" id="192544at2759"/>
<dbReference type="Proteomes" id="UP000186698">
    <property type="component" value="Chromosome 5L"/>
</dbReference>
<dbReference type="Bgee" id="446828">
    <property type="expression patterns" value="Expressed in spleen and 18 other cell types or tissues"/>
</dbReference>
<dbReference type="GO" id="GO:0005765">
    <property type="term" value="C:lysosomal membrane"/>
    <property type="evidence" value="ECO:0000250"/>
    <property type="project" value="UniProtKB"/>
</dbReference>
<dbReference type="GO" id="GO:0006914">
    <property type="term" value="P:autophagy"/>
    <property type="evidence" value="ECO:0007669"/>
    <property type="project" value="UniProtKB-KW"/>
</dbReference>
<dbReference type="GO" id="GO:0045779">
    <property type="term" value="P:negative regulation of bone resorption"/>
    <property type="evidence" value="ECO:0000250"/>
    <property type="project" value="UniProtKB"/>
</dbReference>
<dbReference type="GO" id="GO:0045671">
    <property type="term" value="P:negative regulation of osteoclast differentiation"/>
    <property type="evidence" value="ECO:0000250"/>
    <property type="project" value="UniProtKB"/>
</dbReference>
<dbReference type="GO" id="GO:0150032">
    <property type="term" value="P:positive regulation of protein localization to lysosome"/>
    <property type="evidence" value="ECO:0000250"/>
    <property type="project" value="UniProtKB"/>
</dbReference>
<dbReference type="GO" id="GO:1904263">
    <property type="term" value="P:positive regulation of TORC1 signaling"/>
    <property type="evidence" value="ECO:0000250"/>
    <property type="project" value="UniProtKB"/>
</dbReference>
<dbReference type="GO" id="GO:0010506">
    <property type="term" value="P:regulation of autophagy"/>
    <property type="evidence" value="ECO:0000318"/>
    <property type="project" value="GO_Central"/>
</dbReference>
<dbReference type="CDD" id="cd21476">
    <property type="entry name" value="7tm_GPR137B"/>
    <property type="match status" value="1"/>
</dbReference>
<dbReference type="InterPro" id="IPR029723">
    <property type="entry name" value="GPR137"/>
</dbReference>
<dbReference type="PANTHER" id="PTHR15146">
    <property type="entry name" value="INTEGRAL MEMBRANE PROTEIN GPR137"/>
    <property type="match status" value="1"/>
</dbReference>
<dbReference type="PANTHER" id="PTHR15146:SF0">
    <property type="entry name" value="INTEGRAL MEMBRANE PROTEIN GPR137B"/>
    <property type="match status" value="1"/>
</dbReference>
<evidence type="ECO:0000250" key="1">
    <source>
        <dbReference type="UniProtKB" id="O60478"/>
    </source>
</evidence>
<evidence type="ECO:0000250" key="2">
    <source>
        <dbReference type="UniProtKB" id="Q8BNQ3"/>
    </source>
</evidence>
<evidence type="ECO:0000255" key="3"/>
<evidence type="ECO:0000305" key="4"/>
<keyword id="KW-0072">Autophagy</keyword>
<keyword id="KW-0325">Glycoprotein</keyword>
<keyword id="KW-0458">Lysosome</keyword>
<keyword id="KW-0472">Membrane</keyword>
<keyword id="KW-1185">Reference proteome</keyword>
<keyword id="KW-0812">Transmembrane</keyword>
<keyword id="KW-1133">Transmembrane helix</keyword>
<comment type="function">
    <text evidence="1 2">Lysosomal integral membrane protein that regulates the localization and activity of mTORC1, a signaling complex promoting cell growth in response to growth factors, energy levels, and amino acids. Interacts with Rag GTPases and increases the lysosomial localization and activity of Rag GTPases and thereby regulates mTORC1 translocation and activity in lysosome. Involved in the regulation of lysosomal morphology and autophagy (By similarity). Also acts as a negative regulator of osteoclast activity (By similarity).</text>
</comment>
<comment type="function">
    <text evidence="2">Also acts as a negative regulator of osteoclast activity.</text>
</comment>
<comment type="subcellular location">
    <subcellularLocation>
        <location evidence="1">Lysosome membrane</location>
        <topology evidence="3">Multi-pass membrane protein</topology>
    </subcellularLocation>
</comment>
<comment type="similarity">
    <text evidence="4">Belongs to the GPR137 family.</text>
</comment>
<reference key="1">
    <citation type="submission" date="2004-07" db="EMBL/GenBank/DDBJ databases">
        <authorList>
            <consortium name="NIH - Xenopus Gene Collection (XGC) project"/>
        </authorList>
    </citation>
    <scope>NUCLEOTIDE SEQUENCE [LARGE SCALE MRNA]</scope>
    <source>
        <tissue>Spleen</tissue>
    </source>
</reference>
<gene>
    <name type="primary">gpr137b</name>
</gene>
<proteinExistence type="evidence at transcript level"/>
<feature type="chain" id="PRO_0000304802" description="Integral membrane protein GPR137B">
    <location>
        <begin position="1"/>
        <end position="372"/>
    </location>
</feature>
<feature type="topological domain" description="Lumenal" evidence="4">
    <location>
        <begin position="1"/>
        <end position="32"/>
    </location>
</feature>
<feature type="transmembrane region" description="Helical; Name=1" evidence="3">
    <location>
        <begin position="33"/>
        <end position="53"/>
    </location>
</feature>
<feature type="topological domain" description="Cytoplasmic" evidence="4">
    <location>
        <begin position="54"/>
        <end position="64"/>
    </location>
</feature>
<feature type="transmembrane region" description="Helical; Name=2" evidence="3">
    <location>
        <begin position="65"/>
        <end position="85"/>
    </location>
</feature>
<feature type="topological domain" description="Lumenal" evidence="4">
    <location>
        <begin position="86"/>
        <end position="93"/>
    </location>
</feature>
<feature type="transmembrane region" description="Helical; Name=3" evidence="3">
    <location>
        <begin position="94"/>
        <end position="114"/>
    </location>
</feature>
<feature type="topological domain" description="Cytoplasmic" evidence="4">
    <location>
        <begin position="115"/>
        <end position="144"/>
    </location>
</feature>
<feature type="transmembrane region" description="Helical; Name=4" evidence="3">
    <location>
        <begin position="145"/>
        <end position="165"/>
    </location>
</feature>
<feature type="topological domain" description="Lumenal" evidence="4">
    <location>
        <begin position="166"/>
        <end position="173"/>
    </location>
</feature>
<feature type="transmembrane region" description="Helical; Name=5" evidence="3">
    <location>
        <begin position="174"/>
        <end position="194"/>
    </location>
</feature>
<feature type="topological domain" description="Cytoplasmic" evidence="4">
    <location>
        <begin position="195"/>
        <end position="222"/>
    </location>
</feature>
<feature type="transmembrane region" description="Helical; Name=6" evidence="3">
    <location>
        <begin position="223"/>
        <end position="243"/>
    </location>
</feature>
<feature type="topological domain" description="Lumenal" evidence="4">
    <location>
        <begin position="244"/>
        <end position="276"/>
    </location>
</feature>
<feature type="transmembrane region" description="Helical; Name=7" evidence="3">
    <location>
        <begin position="277"/>
        <end position="297"/>
    </location>
</feature>
<feature type="topological domain" description="Cytoplasmic" evidence="4">
    <location>
        <begin position="298"/>
        <end position="372"/>
    </location>
</feature>
<feature type="glycosylation site" description="N-linked (GlcNAc...) asparagine" evidence="3">
    <location>
        <position position="11"/>
    </location>
</feature>
<feature type="glycosylation site" description="N-linked (GlcNAc...) asparagine" evidence="3">
    <location>
        <position position="259"/>
    </location>
</feature>
<sequence length="372" mass="42728">MESPAWDATKNDSLPPTLTPAVPPYVKLGLTTVYTIFYLLLFAFVYVQLWLVLHYKHKRFSYQTVFLFLCLLWASLRAVLFSFYFRNFVEANRLGAFTFWLLYCFPVCLQFFTLTLMNLYFARVIYKAKSKYLPELIKYRLPLYLAFLVISLLFLVVNLTCAILVKTDYAETKVIVSIRVAINDTLFVLCAVSLSVCLYKISKMSLAGVYLESKGSSVCQVTCIGVTVILLYTSRACYNLVVLSLSDSRYSSFDYDWYNVSDQADLKCKLGDAGYVVFGIILFIWELFPTSLVVYFFRVRNSAQDMTNPGMVPGFNPRSYFFDNPRRYDSDDDLAWNITPQSLQGSFGPDYFDWGNRNSFGSQTGSLQRDST</sequence>
<name>G137B_XENLA</name>
<protein>
    <recommendedName>
        <fullName>Integral membrane protein GPR137B</fullName>
    </recommendedName>
</protein>
<organism>
    <name type="scientific">Xenopus laevis</name>
    <name type="common">African clawed frog</name>
    <dbReference type="NCBI Taxonomy" id="8355"/>
    <lineage>
        <taxon>Eukaryota</taxon>
        <taxon>Metazoa</taxon>
        <taxon>Chordata</taxon>
        <taxon>Craniata</taxon>
        <taxon>Vertebrata</taxon>
        <taxon>Euteleostomi</taxon>
        <taxon>Amphibia</taxon>
        <taxon>Batrachia</taxon>
        <taxon>Anura</taxon>
        <taxon>Pipoidea</taxon>
        <taxon>Pipidae</taxon>
        <taxon>Xenopodinae</taxon>
        <taxon>Xenopus</taxon>
        <taxon>Xenopus</taxon>
    </lineage>
</organism>